<protein>
    <recommendedName>
        <fullName evidence="4">Host transcription reprogramming factor 7</fullName>
    </recommendedName>
    <alternativeName>
        <fullName evidence="4">Secreted nuclear effector HTR7</fullName>
    </alternativeName>
</protein>
<proteinExistence type="evidence at transcript level"/>
<gene>
    <name evidence="4" type="primary">HTR7</name>
    <name type="ORF">MGG_07699</name>
</gene>
<evidence type="ECO:0000255" key="1"/>
<evidence type="ECO:0000255" key="2">
    <source>
        <dbReference type="PROSITE-ProRule" id="PRU00042"/>
    </source>
</evidence>
<evidence type="ECO:0000269" key="3">
    <source>
    </source>
</evidence>
<evidence type="ECO:0000303" key="4">
    <source>
    </source>
</evidence>
<evidence type="ECO:0000305" key="5">
    <source>
    </source>
</evidence>
<accession>G4N3F6</accession>
<feature type="signal peptide" evidence="1">
    <location>
        <begin position="1"/>
        <end position="19"/>
    </location>
</feature>
<feature type="chain" id="PRO_5003466067" description="Host transcription reprogramming factor 7">
    <location>
        <begin position="20"/>
        <end position="105"/>
    </location>
</feature>
<feature type="zinc finger region" description="C2H2-type" evidence="2">
    <location>
        <begin position="69"/>
        <end position="95"/>
    </location>
</feature>
<keyword id="KW-1048">Host nucleus</keyword>
<keyword id="KW-0479">Metal-binding</keyword>
<keyword id="KW-1185">Reference proteome</keyword>
<keyword id="KW-0964">Secreted</keyword>
<keyword id="KW-0732">Signal</keyword>
<keyword id="KW-0804">Transcription</keyword>
<keyword id="KW-0805">Transcription regulation</keyword>
<keyword id="KW-0843">Virulence</keyword>
<keyword id="KW-0862">Zinc</keyword>
<keyword id="KW-0863">Zinc-finger</keyword>
<sequence>MKTKTIFQLVALFAIGATAAPTGCGETRDIQAEAVKPRDVAASQTLHLDARSDIIKGGSSNLERREIWYWCRIGNCNAAFKSLAARCRHEKTAVHIAPESDSDSE</sequence>
<dbReference type="EMBL" id="CM001233">
    <property type="protein sequence ID" value="EHA51834.1"/>
    <property type="molecule type" value="Genomic_DNA"/>
</dbReference>
<dbReference type="RefSeq" id="XP_003711641.1">
    <property type="nucleotide sequence ID" value="XM_003711593.1"/>
</dbReference>
<dbReference type="EnsemblFungi" id="MGG_07699T0">
    <property type="protein sequence ID" value="MGG_07699T0"/>
    <property type="gene ID" value="MGG_07699"/>
</dbReference>
<dbReference type="GeneID" id="2683619"/>
<dbReference type="KEGG" id="mgr:MGG_07699"/>
<dbReference type="VEuPathDB" id="FungiDB:MGG_07699"/>
<dbReference type="HOGENOM" id="CLU_2237122_0_0_1"/>
<dbReference type="InParanoid" id="G4N3F6"/>
<dbReference type="OrthoDB" id="10538615at2759"/>
<dbReference type="Proteomes" id="UP000009058">
    <property type="component" value="Chromosome 3"/>
</dbReference>
<dbReference type="GO" id="GO:0005576">
    <property type="term" value="C:extracellular region"/>
    <property type="evidence" value="ECO:0007669"/>
    <property type="project" value="UniProtKB-SubCell"/>
</dbReference>
<dbReference type="GO" id="GO:0042025">
    <property type="term" value="C:host cell nucleus"/>
    <property type="evidence" value="ECO:0007669"/>
    <property type="project" value="UniProtKB-SubCell"/>
</dbReference>
<dbReference type="GO" id="GO:0008270">
    <property type="term" value="F:zinc ion binding"/>
    <property type="evidence" value="ECO:0007669"/>
    <property type="project" value="UniProtKB-KW"/>
</dbReference>
<dbReference type="InterPro" id="IPR013087">
    <property type="entry name" value="Znf_C2H2_type"/>
</dbReference>
<dbReference type="PROSITE" id="PS00028">
    <property type="entry name" value="ZINC_FINGER_C2H2_1"/>
    <property type="match status" value="1"/>
</dbReference>
<organism>
    <name type="scientific">Pyricularia oryzae (strain 70-15 / ATCC MYA-4617 / FGSC 8958)</name>
    <name type="common">Rice blast fungus</name>
    <name type="synonym">Magnaporthe oryzae</name>
    <dbReference type="NCBI Taxonomy" id="242507"/>
    <lineage>
        <taxon>Eukaryota</taxon>
        <taxon>Fungi</taxon>
        <taxon>Dikarya</taxon>
        <taxon>Ascomycota</taxon>
        <taxon>Pezizomycotina</taxon>
        <taxon>Sordariomycetes</taxon>
        <taxon>Sordariomycetidae</taxon>
        <taxon>Magnaporthales</taxon>
        <taxon>Pyriculariaceae</taxon>
        <taxon>Pyricularia</taxon>
    </lineage>
</organism>
<reference key="1">
    <citation type="journal article" date="2005" name="Nature">
        <title>The genome sequence of the rice blast fungus Magnaporthe grisea.</title>
        <authorList>
            <person name="Dean R.A."/>
            <person name="Talbot N.J."/>
            <person name="Ebbole D.J."/>
            <person name="Farman M.L."/>
            <person name="Mitchell T.K."/>
            <person name="Orbach M.J."/>
            <person name="Thon M.R."/>
            <person name="Kulkarni R."/>
            <person name="Xu J.-R."/>
            <person name="Pan H."/>
            <person name="Read N.D."/>
            <person name="Lee Y.-H."/>
            <person name="Carbone I."/>
            <person name="Brown D."/>
            <person name="Oh Y.Y."/>
            <person name="Donofrio N."/>
            <person name="Jeong J.S."/>
            <person name="Soanes D.M."/>
            <person name="Djonovic S."/>
            <person name="Kolomiets E."/>
            <person name="Rehmeyer C."/>
            <person name="Li W."/>
            <person name="Harding M."/>
            <person name="Kim S."/>
            <person name="Lebrun M.-H."/>
            <person name="Bohnert H."/>
            <person name="Coughlan S."/>
            <person name="Butler J."/>
            <person name="Calvo S.E."/>
            <person name="Ma L.-J."/>
            <person name="Nicol R."/>
            <person name="Purcell S."/>
            <person name="Nusbaum C."/>
            <person name="Galagan J.E."/>
            <person name="Birren B.W."/>
        </authorList>
    </citation>
    <scope>NUCLEOTIDE SEQUENCE [LARGE SCALE GENOMIC DNA]</scope>
    <source>
        <strain>70-15 / ATCC MYA-4617 / FGSC 8958</strain>
    </source>
</reference>
<reference key="2">
    <citation type="journal article" date="2020" name="Nat. Commun.">
        <title>Two nuclear effectors of the rice blast fungus modulate host immunity via transcriptional reprogramming.</title>
        <authorList>
            <person name="Kim S."/>
            <person name="Kim C.Y."/>
            <person name="Park S.Y."/>
            <person name="Kim K.T."/>
            <person name="Jeon J."/>
            <person name="Chung H."/>
            <person name="Choi G."/>
            <person name="Kwon S."/>
            <person name="Choi J."/>
            <person name="Jeon J."/>
            <person name="Jeon J.S."/>
            <person name="Khang C.H."/>
            <person name="Kang S."/>
            <person name="Lee Y.H."/>
        </authorList>
    </citation>
    <scope>FUNCTION</scope>
    <scope>INDUCTION</scope>
</reference>
<name>HTR7_PYRO7</name>
<comment type="function">
    <text evidence="5">Probable secreted effector that translocates into the nuclei of host cells to reprogram the expression of targeted genes by binding on effector binding elements in rice.</text>
</comment>
<comment type="subcellular location">
    <subcellularLocation>
        <location evidence="1">Secreted</location>
    </subcellularLocation>
    <subcellularLocation>
        <location evidence="5">Host nucleus</location>
    </subcellularLocation>
</comment>
<comment type="induction">
    <text evidence="3">Expressed during multiple stages of host plant infection, including the prepenetration, late biotrophy, transition and necrotrophy.</text>
</comment>